<organism>
    <name type="scientific">Protobothrops jerdonii</name>
    <name type="common">Jerdon's pitviper</name>
    <name type="synonym">Trimeresurus jerdonii</name>
    <dbReference type="NCBI Taxonomy" id="242841"/>
    <lineage>
        <taxon>Eukaryota</taxon>
        <taxon>Metazoa</taxon>
        <taxon>Chordata</taxon>
        <taxon>Craniata</taxon>
        <taxon>Vertebrata</taxon>
        <taxon>Euteleostomi</taxon>
        <taxon>Lepidosauria</taxon>
        <taxon>Squamata</taxon>
        <taxon>Bifurcata</taxon>
        <taxon>Unidentata</taxon>
        <taxon>Episquamata</taxon>
        <taxon>Toxicofera</taxon>
        <taxon>Serpentes</taxon>
        <taxon>Colubroidea</taxon>
        <taxon>Viperidae</taxon>
        <taxon>Crotalinae</taxon>
        <taxon>Protobothrops</taxon>
    </lineage>
</organism>
<proteinExistence type="evidence at protein level"/>
<name>VSPJN_PROJR</name>
<dbReference type="EC" id="3.4.21.-" evidence="4"/>
<dbReference type="SABIO-RK" id="P0DMU0"/>
<dbReference type="GO" id="GO:0005576">
    <property type="term" value="C:extracellular region"/>
    <property type="evidence" value="ECO:0007669"/>
    <property type="project" value="UniProtKB-SubCell"/>
</dbReference>
<dbReference type="GO" id="GO:0008236">
    <property type="term" value="F:serine-type peptidase activity"/>
    <property type="evidence" value="ECO:0007669"/>
    <property type="project" value="UniProtKB-KW"/>
</dbReference>
<dbReference type="GO" id="GO:0090729">
    <property type="term" value="F:toxin activity"/>
    <property type="evidence" value="ECO:0007669"/>
    <property type="project" value="UniProtKB-KW"/>
</dbReference>
<dbReference type="GO" id="GO:0006508">
    <property type="term" value="P:proteolysis"/>
    <property type="evidence" value="ECO:0007669"/>
    <property type="project" value="UniProtKB-KW"/>
</dbReference>
<evidence type="ECO:0000250" key="1"/>
<evidence type="ECO:0000250" key="2">
    <source>
        <dbReference type="UniProtKB" id="P05620"/>
    </source>
</evidence>
<evidence type="ECO:0000255" key="3">
    <source>
        <dbReference type="PROSITE-ProRule" id="PRU00274"/>
    </source>
</evidence>
<evidence type="ECO:0000269" key="4">
    <source>
    </source>
</evidence>
<evidence type="ECO:0000305" key="5"/>
<keyword id="KW-0903">Direct protein sequencing</keyword>
<keyword id="KW-1015">Disulfide bond</keyword>
<keyword id="KW-1206">Fibrinogenolytic toxin</keyword>
<keyword id="KW-1205">Fibrinolytic toxin</keyword>
<keyword id="KW-0325">Glycoprotein</keyword>
<keyword id="KW-1199">Hemostasis impairing toxin</keyword>
<keyword id="KW-0378">Hydrolase</keyword>
<keyword id="KW-0645">Protease</keyword>
<keyword id="KW-0964">Secreted</keyword>
<keyword id="KW-0720">Serine protease</keyword>
<keyword id="KW-0800">Toxin</keyword>
<comment type="function">
    <text evidence="4">Multifunctional venom serine protease that has fibrino(geno)lytic activity towards the A alpha-chain of human fibrinogen (FGA) and a slow activity towards the B beta-chain (FGB). Also hydrolyzes bovine low-molecular-mass kininogen and releases bradykinin. Catalyzes the hydrolysis of BAEE, S-2238 and S-2302.</text>
</comment>
<comment type="activity regulation">
    <text evidence="4">Inhibited by PMSF and soybean trypsin inhibitor. Partially inhibited by L-cysteine and DTT. Not affected by EDTA.</text>
</comment>
<comment type="biophysicochemical properties">
    <kinetics>
        <KM evidence="4">6.25 uM for S-2302 (plasma kallikrein substrate)</KM>
        <KM evidence="4">41.6 uM for S-2238 (thrombin substrate)</KM>
    </kinetics>
</comment>
<comment type="subunit">
    <text evidence="1">Monomer.</text>
</comment>
<comment type="subcellular location">
    <subcellularLocation>
        <location evidence="4">Secreted</location>
    </subcellularLocation>
</comment>
<comment type="tissue specificity">
    <text evidence="5">Expressed by the venom gland.</text>
</comment>
<comment type="PTM">
    <text evidence="4">Glycosylated; contains 35.8% neutral carbohydrate.</text>
</comment>
<comment type="miscellaneous">
    <text evidence="4">Negative results: the enzyme does not catalyze S-2251 (a plasminogen activator substrate). Has little effect on digesting gamma-chain of fibrinogen.</text>
</comment>
<comment type="similarity">
    <text evidence="3">Belongs to the peptidase S1 family. Snake venom subfamily.</text>
</comment>
<accession>P0DMU0</accession>
<sequence length="21" mass="2304">IIGGDECNINEHPFLVALYDA</sequence>
<feature type="chain" id="PRO_0000432787" description="Snake venom serine protease jerdonase">
    <location>
        <begin position="1"/>
        <end position="21" status="greater than"/>
    </location>
</feature>
<feature type="domain" description="Peptidase S1" evidence="3">
    <location>
        <begin position="1"/>
        <end position="21" status="greater than"/>
    </location>
</feature>
<feature type="disulfide bond" evidence="2">
    <location>
        <begin position="7"/>
        <end status="unknown"/>
    </location>
</feature>
<feature type="non-terminal residue">
    <location>
        <position position="21"/>
    </location>
</feature>
<reference key="1">
    <citation type="journal article" date="2003" name="Sheng Wu Hua Xue Yu Sheng Wu Wu Li Xue Bao">
        <title>Jerdonase, a novel serine protease with kinin-releasing and fibrinogenolytic activity from Trimeresurus jerdonii venom.</title>
        <authorList>
            <person name="Jia Y.H."/>
            <person name="Jin Y."/>
            <person name="Lue Q.M."/>
            <person name="Li D.S."/>
            <person name="Wang W.Y."/>
            <person name="Xiong Y.L."/>
        </authorList>
    </citation>
    <scope>PROTEIN SEQUENCE</scope>
    <scope>FUNCTION</scope>
    <scope>SUBCELLULAR LOCATION</scope>
    <scope>BIOPHYSICOCHEMICAL PROPERTIES</scope>
    <scope>ACTIVITY REGULATION</scope>
    <scope>GLYCOSYLATION</scope>
    <source>
        <tissue>Venom</tissue>
    </source>
</reference>
<protein>
    <recommendedName>
        <fullName>Snake venom serine protease jerdonase</fullName>
        <shortName>SVSP</shortName>
        <ecNumber evidence="4">3.4.21.-</ecNumber>
    </recommendedName>
</protein>